<name>HOGA1_MOUSE</name>
<gene>
    <name type="primary">Hoga1</name>
    <name type="synonym">Dhdpsl</name>
</gene>
<evidence type="ECO:0000250" key="1"/>
<evidence type="ECO:0000250" key="2">
    <source>
        <dbReference type="UniProtKB" id="Q0P5I5"/>
    </source>
</evidence>
<evidence type="ECO:0000305" key="3"/>
<sequence length="321" mass="34644">MLGPQIWASMRQGLSRGLSRNVKGKKVDIAGIYPPVTTPFTATAEVDYGKLEENLNRLATFPFRGFVVQGSTGEFPFLTSLERLEVVSRVRQAIPKDKFLIAGSGCESTQATVEMTVSMAQVGADVAMVVTPCYYRGRMSSAALIHHYTKVADVSPIPVVLYSVPANTGLELPVDAVVTLSQHPNIIGLKDSGGDVTRIGLIVHKTSKQDFQVLAGSAGFLLASYAVGAVGGICGLANVLGAQVCQLERLCLTGQWEAAQELQHRLIEPNTAVTRRFGIPGLKKTMDWFGYYGGPCRAPLQELSPTEEEALRLDFSNNGWL</sequence>
<protein>
    <recommendedName>
        <fullName>4-hydroxy-2-oxoglutarate aldolase, mitochondrial</fullName>
        <ecNumber>4.1.3.16</ecNumber>
    </recommendedName>
    <alternativeName>
        <fullName>Dihydrodipicolinate synthase-like</fullName>
        <shortName>DHDPS-like protein</shortName>
    </alternativeName>
    <alternativeName>
        <fullName>Probable 2-keto-4-hydroxyglutarate aldolase</fullName>
        <shortName>Probable KHG-aldolase</shortName>
    </alternativeName>
</protein>
<feature type="transit peptide" description="Mitochondrion" evidence="2">
    <location>
        <begin position="1"/>
        <end position="23"/>
    </location>
</feature>
<feature type="chain" id="PRO_0000273347" description="4-hydroxy-2-oxoglutarate aldolase, mitochondrial">
    <location>
        <begin position="24"/>
        <end position="321"/>
    </location>
</feature>
<feature type="active site" description="Schiff-base intermediate with substrate" evidence="1">
    <location>
        <position position="190"/>
    </location>
</feature>
<feature type="binding site" evidence="1">
    <location>
        <begin position="71"/>
        <end position="72"/>
    </location>
    <ligand>
        <name>substrate</name>
    </ligand>
</feature>
<feature type="binding site" evidence="1">
    <location>
        <position position="192"/>
    </location>
    <ligand>
        <name>substrate</name>
    </ligand>
</feature>
<feature type="binding site" evidence="1">
    <location>
        <position position="216"/>
    </location>
    <ligand>
        <name>substrate</name>
    </ligand>
</feature>
<feature type="site" description="Involved in proton transfer during cleavage" evidence="1">
    <location>
        <position position="162"/>
    </location>
</feature>
<feature type="sequence conflict" description="In Ref. 1; BAB27226." evidence="3" ref="1">
    <original>K</original>
    <variation>M</variation>
    <location>
        <position position="25"/>
    </location>
</feature>
<accession>Q9DCU9</accession>
<accession>Q91W74</accession>
<accession>Q9CY60</accession>
<dbReference type="EC" id="4.1.3.16"/>
<dbReference type="EMBL" id="AK002457">
    <property type="protein sequence ID" value="BAB22114.1"/>
    <property type="molecule type" value="mRNA"/>
</dbReference>
<dbReference type="EMBL" id="AK010857">
    <property type="protein sequence ID" value="BAB27226.1"/>
    <property type="status" value="ALT_FRAME"/>
    <property type="molecule type" value="mRNA"/>
</dbReference>
<dbReference type="EMBL" id="BC016430">
    <property type="protein sequence ID" value="AAH16430.1"/>
    <property type="status" value="ALT_SEQ"/>
    <property type="molecule type" value="mRNA"/>
</dbReference>
<dbReference type="CCDS" id="CCDS29820.1"/>
<dbReference type="RefSeq" id="NP_080428.1">
    <property type="nucleotide sequence ID" value="NM_026152.2"/>
</dbReference>
<dbReference type="SMR" id="Q9DCU9"/>
<dbReference type="FunCoup" id="Q9DCU9">
    <property type="interactions" value="541"/>
</dbReference>
<dbReference type="STRING" id="10090.ENSMUSP00000080414"/>
<dbReference type="GlyGen" id="Q9DCU9">
    <property type="glycosylation" value="1 site, 1 O-linked glycan (1 site)"/>
</dbReference>
<dbReference type="iPTMnet" id="Q9DCU9"/>
<dbReference type="PhosphoSitePlus" id="Q9DCU9"/>
<dbReference type="SwissPalm" id="Q9DCU9"/>
<dbReference type="jPOST" id="Q9DCU9"/>
<dbReference type="PaxDb" id="10090-ENSMUSP00000080414"/>
<dbReference type="PeptideAtlas" id="Q9DCU9"/>
<dbReference type="ProteomicsDB" id="267059"/>
<dbReference type="Pumba" id="Q9DCU9"/>
<dbReference type="Antibodypedia" id="55095">
    <property type="antibodies" value="15 antibodies from 8 providers"/>
</dbReference>
<dbReference type="DNASU" id="67432"/>
<dbReference type="Ensembl" id="ENSMUST00000081714.5">
    <property type="protein sequence ID" value="ENSMUSP00000080414.5"/>
    <property type="gene ID" value="ENSMUSG00000025176.15"/>
</dbReference>
<dbReference type="GeneID" id="67432"/>
<dbReference type="KEGG" id="mmu:67432"/>
<dbReference type="UCSC" id="uc008hnb.1">
    <property type="organism name" value="mouse"/>
</dbReference>
<dbReference type="AGR" id="MGI:1914682"/>
<dbReference type="CTD" id="112817"/>
<dbReference type="MGI" id="MGI:1914682">
    <property type="gene designation" value="Hoga1"/>
</dbReference>
<dbReference type="VEuPathDB" id="HostDB:ENSMUSG00000025176"/>
<dbReference type="eggNOG" id="ENOG502QWNS">
    <property type="taxonomic scope" value="Eukaryota"/>
</dbReference>
<dbReference type="GeneTree" id="ENSGT00530000063604"/>
<dbReference type="HOGENOM" id="CLU_049343_0_1_1"/>
<dbReference type="InParanoid" id="Q9DCU9"/>
<dbReference type="OMA" id="GMDACVP"/>
<dbReference type="OrthoDB" id="191315at2759"/>
<dbReference type="PhylomeDB" id="Q9DCU9"/>
<dbReference type="TreeFam" id="TF324600"/>
<dbReference type="Reactome" id="R-MMU-389661">
    <property type="pathway name" value="Glyoxylate metabolism and glycine degradation"/>
</dbReference>
<dbReference type="BioGRID-ORCS" id="67432">
    <property type="hits" value="2 hits in 77 CRISPR screens"/>
</dbReference>
<dbReference type="ChiTaRS" id="Hoga1">
    <property type="organism name" value="mouse"/>
</dbReference>
<dbReference type="PRO" id="PR:Q9DCU9"/>
<dbReference type="Proteomes" id="UP000000589">
    <property type="component" value="Chromosome 19"/>
</dbReference>
<dbReference type="RNAct" id="Q9DCU9">
    <property type="molecule type" value="protein"/>
</dbReference>
<dbReference type="Bgee" id="ENSMUSG00000025176">
    <property type="expression patterns" value="Expressed in right kidney and 149 other cell types or tissues"/>
</dbReference>
<dbReference type="ExpressionAtlas" id="Q9DCU9">
    <property type="expression patterns" value="baseline and differential"/>
</dbReference>
<dbReference type="GO" id="GO:0005739">
    <property type="term" value="C:mitochondrion"/>
    <property type="evidence" value="ECO:0007005"/>
    <property type="project" value="MGI"/>
</dbReference>
<dbReference type="GO" id="GO:0106009">
    <property type="term" value="F:(4S)-4-hydroxy-2-oxoglutarate aldolase activity"/>
    <property type="evidence" value="ECO:0007669"/>
    <property type="project" value="RHEA"/>
</dbReference>
<dbReference type="GO" id="GO:0008700">
    <property type="term" value="F:(R,S)-4-hydroxy-2-oxoglutarate aldolase activity"/>
    <property type="evidence" value="ECO:0000250"/>
    <property type="project" value="UniProtKB"/>
</dbReference>
<dbReference type="GO" id="GO:0042803">
    <property type="term" value="F:protein homodimerization activity"/>
    <property type="evidence" value="ECO:0007669"/>
    <property type="project" value="Ensembl"/>
</dbReference>
<dbReference type="GO" id="GO:0019470">
    <property type="term" value="P:4-hydroxyproline catabolic process"/>
    <property type="evidence" value="ECO:0007669"/>
    <property type="project" value="Ensembl"/>
</dbReference>
<dbReference type="GO" id="GO:0009436">
    <property type="term" value="P:glyoxylate catabolic process"/>
    <property type="evidence" value="ECO:0000250"/>
    <property type="project" value="UniProtKB"/>
</dbReference>
<dbReference type="GO" id="GO:0033609">
    <property type="term" value="P:oxalate metabolic process"/>
    <property type="evidence" value="ECO:0007669"/>
    <property type="project" value="Ensembl"/>
</dbReference>
<dbReference type="GO" id="GO:0042866">
    <property type="term" value="P:pyruvate biosynthetic process"/>
    <property type="evidence" value="ECO:0007669"/>
    <property type="project" value="Ensembl"/>
</dbReference>
<dbReference type="CDD" id="cd00408">
    <property type="entry name" value="DHDPS-like"/>
    <property type="match status" value="1"/>
</dbReference>
<dbReference type="FunFam" id="3.20.20.70:FF:000153">
    <property type="entry name" value="4-hydroxy-2-oxoglutarate aldolase, mitochondrial isoform X1"/>
    <property type="match status" value="1"/>
</dbReference>
<dbReference type="Gene3D" id="3.20.20.70">
    <property type="entry name" value="Aldolase class I"/>
    <property type="match status" value="1"/>
</dbReference>
<dbReference type="InterPro" id="IPR013785">
    <property type="entry name" value="Aldolase_TIM"/>
</dbReference>
<dbReference type="InterPro" id="IPR002220">
    <property type="entry name" value="DapA-like"/>
</dbReference>
<dbReference type="InterPro" id="IPR020625">
    <property type="entry name" value="Schiff_base-form_aldolases_AS"/>
</dbReference>
<dbReference type="PANTHER" id="PTHR12128:SF66">
    <property type="entry name" value="4-HYDROXY-2-OXOGLUTARATE ALDOLASE, MITOCHONDRIAL"/>
    <property type="match status" value="1"/>
</dbReference>
<dbReference type="PANTHER" id="PTHR12128">
    <property type="entry name" value="DIHYDRODIPICOLINATE SYNTHASE"/>
    <property type="match status" value="1"/>
</dbReference>
<dbReference type="Pfam" id="PF00701">
    <property type="entry name" value="DHDPS"/>
    <property type="match status" value="1"/>
</dbReference>
<dbReference type="PIRSF" id="PIRSF001365">
    <property type="entry name" value="DHDPS"/>
    <property type="match status" value="1"/>
</dbReference>
<dbReference type="PRINTS" id="PR00146">
    <property type="entry name" value="DHPICSNTHASE"/>
</dbReference>
<dbReference type="SMART" id="SM01130">
    <property type="entry name" value="DHDPS"/>
    <property type="match status" value="1"/>
</dbReference>
<dbReference type="SUPFAM" id="SSF51569">
    <property type="entry name" value="Aldolase"/>
    <property type="match status" value="1"/>
</dbReference>
<dbReference type="PROSITE" id="PS00666">
    <property type="entry name" value="DHDPS_2"/>
    <property type="match status" value="1"/>
</dbReference>
<keyword id="KW-0456">Lyase</keyword>
<keyword id="KW-0496">Mitochondrion</keyword>
<keyword id="KW-1185">Reference proteome</keyword>
<keyword id="KW-0704">Schiff base</keyword>
<keyword id="KW-0809">Transit peptide</keyword>
<proteinExistence type="evidence at protein level"/>
<organism>
    <name type="scientific">Mus musculus</name>
    <name type="common">Mouse</name>
    <dbReference type="NCBI Taxonomy" id="10090"/>
    <lineage>
        <taxon>Eukaryota</taxon>
        <taxon>Metazoa</taxon>
        <taxon>Chordata</taxon>
        <taxon>Craniata</taxon>
        <taxon>Vertebrata</taxon>
        <taxon>Euteleostomi</taxon>
        <taxon>Mammalia</taxon>
        <taxon>Eutheria</taxon>
        <taxon>Euarchontoglires</taxon>
        <taxon>Glires</taxon>
        <taxon>Rodentia</taxon>
        <taxon>Myomorpha</taxon>
        <taxon>Muroidea</taxon>
        <taxon>Muridae</taxon>
        <taxon>Murinae</taxon>
        <taxon>Mus</taxon>
        <taxon>Mus</taxon>
    </lineage>
</organism>
<reference key="1">
    <citation type="journal article" date="2005" name="Science">
        <title>The transcriptional landscape of the mammalian genome.</title>
        <authorList>
            <person name="Carninci P."/>
            <person name="Kasukawa T."/>
            <person name="Katayama S."/>
            <person name="Gough J."/>
            <person name="Frith M.C."/>
            <person name="Maeda N."/>
            <person name="Oyama R."/>
            <person name="Ravasi T."/>
            <person name="Lenhard B."/>
            <person name="Wells C."/>
            <person name="Kodzius R."/>
            <person name="Shimokawa K."/>
            <person name="Bajic V.B."/>
            <person name="Brenner S.E."/>
            <person name="Batalov S."/>
            <person name="Forrest A.R."/>
            <person name="Zavolan M."/>
            <person name="Davis M.J."/>
            <person name="Wilming L.G."/>
            <person name="Aidinis V."/>
            <person name="Allen J.E."/>
            <person name="Ambesi-Impiombato A."/>
            <person name="Apweiler R."/>
            <person name="Aturaliya R.N."/>
            <person name="Bailey T.L."/>
            <person name="Bansal M."/>
            <person name="Baxter L."/>
            <person name="Beisel K.W."/>
            <person name="Bersano T."/>
            <person name="Bono H."/>
            <person name="Chalk A.M."/>
            <person name="Chiu K.P."/>
            <person name="Choudhary V."/>
            <person name="Christoffels A."/>
            <person name="Clutterbuck D.R."/>
            <person name="Crowe M.L."/>
            <person name="Dalla E."/>
            <person name="Dalrymple B.P."/>
            <person name="de Bono B."/>
            <person name="Della Gatta G."/>
            <person name="di Bernardo D."/>
            <person name="Down T."/>
            <person name="Engstrom P."/>
            <person name="Fagiolini M."/>
            <person name="Faulkner G."/>
            <person name="Fletcher C.F."/>
            <person name="Fukushima T."/>
            <person name="Furuno M."/>
            <person name="Futaki S."/>
            <person name="Gariboldi M."/>
            <person name="Georgii-Hemming P."/>
            <person name="Gingeras T.R."/>
            <person name="Gojobori T."/>
            <person name="Green R.E."/>
            <person name="Gustincich S."/>
            <person name="Harbers M."/>
            <person name="Hayashi Y."/>
            <person name="Hensch T.K."/>
            <person name="Hirokawa N."/>
            <person name="Hill D."/>
            <person name="Huminiecki L."/>
            <person name="Iacono M."/>
            <person name="Ikeo K."/>
            <person name="Iwama A."/>
            <person name="Ishikawa T."/>
            <person name="Jakt M."/>
            <person name="Kanapin A."/>
            <person name="Katoh M."/>
            <person name="Kawasawa Y."/>
            <person name="Kelso J."/>
            <person name="Kitamura H."/>
            <person name="Kitano H."/>
            <person name="Kollias G."/>
            <person name="Krishnan S.P."/>
            <person name="Kruger A."/>
            <person name="Kummerfeld S.K."/>
            <person name="Kurochkin I.V."/>
            <person name="Lareau L.F."/>
            <person name="Lazarevic D."/>
            <person name="Lipovich L."/>
            <person name="Liu J."/>
            <person name="Liuni S."/>
            <person name="McWilliam S."/>
            <person name="Madan Babu M."/>
            <person name="Madera M."/>
            <person name="Marchionni L."/>
            <person name="Matsuda H."/>
            <person name="Matsuzawa S."/>
            <person name="Miki H."/>
            <person name="Mignone F."/>
            <person name="Miyake S."/>
            <person name="Morris K."/>
            <person name="Mottagui-Tabar S."/>
            <person name="Mulder N."/>
            <person name="Nakano N."/>
            <person name="Nakauchi H."/>
            <person name="Ng P."/>
            <person name="Nilsson R."/>
            <person name="Nishiguchi S."/>
            <person name="Nishikawa S."/>
            <person name="Nori F."/>
            <person name="Ohara O."/>
            <person name="Okazaki Y."/>
            <person name="Orlando V."/>
            <person name="Pang K.C."/>
            <person name="Pavan W.J."/>
            <person name="Pavesi G."/>
            <person name="Pesole G."/>
            <person name="Petrovsky N."/>
            <person name="Piazza S."/>
            <person name="Reed J."/>
            <person name="Reid J.F."/>
            <person name="Ring B.Z."/>
            <person name="Ringwald M."/>
            <person name="Rost B."/>
            <person name="Ruan Y."/>
            <person name="Salzberg S.L."/>
            <person name="Sandelin A."/>
            <person name="Schneider C."/>
            <person name="Schoenbach C."/>
            <person name="Sekiguchi K."/>
            <person name="Semple C.A."/>
            <person name="Seno S."/>
            <person name="Sessa L."/>
            <person name="Sheng Y."/>
            <person name="Shibata Y."/>
            <person name="Shimada H."/>
            <person name="Shimada K."/>
            <person name="Silva D."/>
            <person name="Sinclair B."/>
            <person name="Sperling S."/>
            <person name="Stupka E."/>
            <person name="Sugiura K."/>
            <person name="Sultana R."/>
            <person name="Takenaka Y."/>
            <person name="Taki K."/>
            <person name="Tammoja K."/>
            <person name="Tan S.L."/>
            <person name="Tang S."/>
            <person name="Taylor M.S."/>
            <person name="Tegner J."/>
            <person name="Teichmann S.A."/>
            <person name="Ueda H.R."/>
            <person name="van Nimwegen E."/>
            <person name="Verardo R."/>
            <person name="Wei C.L."/>
            <person name="Yagi K."/>
            <person name="Yamanishi H."/>
            <person name="Zabarovsky E."/>
            <person name="Zhu S."/>
            <person name="Zimmer A."/>
            <person name="Hide W."/>
            <person name="Bult C."/>
            <person name="Grimmond S.M."/>
            <person name="Teasdale R.D."/>
            <person name="Liu E.T."/>
            <person name="Brusic V."/>
            <person name="Quackenbush J."/>
            <person name="Wahlestedt C."/>
            <person name="Mattick J.S."/>
            <person name="Hume D.A."/>
            <person name="Kai C."/>
            <person name="Sasaki D."/>
            <person name="Tomaru Y."/>
            <person name="Fukuda S."/>
            <person name="Kanamori-Katayama M."/>
            <person name="Suzuki M."/>
            <person name="Aoki J."/>
            <person name="Arakawa T."/>
            <person name="Iida J."/>
            <person name="Imamura K."/>
            <person name="Itoh M."/>
            <person name="Kato T."/>
            <person name="Kawaji H."/>
            <person name="Kawagashira N."/>
            <person name="Kawashima T."/>
            <person name="Kojima M."/>
            <person name="Kondo S."/>
            <person name="Konno H."/>
            <person name="Nakano K."/>
            <person name="Ninomiya N."/>
            <person name="Nishio T."/>
            <person name="Okada M."/>
            <person name="Plessy C."/>
            <person name="Shibata K."/>
            <person name="Shiraki T."/>
            <person name="Suzuki S."/>
            <person name="Tagami M."/>
            <person name="Waki K."/>
            <person name="Watahiki A."/>
            <person name="Okamura-Oho Y."/>
            <person name="Suzuki H."/>
            <person name="Kawai J."/>
            <person name="Hayashizaki Y."/>
        </authorList>
    </citation>
    <scope>NUCLEOTIDE SEQUENCE [LARGE SCALE MRNA]</scope>
    <source>
        <strain>C57BL/6J</strain>
        <tissue>Kidney</tissue>
        <tissue>Liver</tissue>
    </source>
</reference>
<reference key="2">
    <citation type="journal article" date="2004" name="Genome Res.">
        <title>The status, quality, and expansion of the NIH full-length cDNA project: the Mammalian Gene Collection (MGC).</title>
        <authorList>
            <consortium name="The MGC Project Team"/>
        </authorList>
    </citation>
    <scope>NUCLEOTIDE SEQUENCE [LARGE SCALE MRNA]</scope>
    <source>
        <strain>FVB/N</strain>
        <tissue>Kidney</tissue>
    </source>
</reference>
<reference key="3">
    <citation type="journal article" date="2010" name="Cell">
        <title>A tissue-specific atlas of mouse protein phosphorylation and expression.</title>
        <authorList>
            <person name="Huttlin E.L."/>
            <person name="Jedrychowski M.P."/>
            <person name="Elias J.E."/>
            <person name="Goswami T."/>
            <person name="Rad R."/>
            <person name="Beausoleil S.A."/>
            <person name="Villen J."/>
            <person name="Haas W."/>
            <person name="Sowa M.E."/>
            <person name="Gygi S.P."/>
        </authorList>
    </citation>
    <scope>IDENTIFICATION BY MASS SPECTROMETRY [LARGE SCALE ANALYSIS]</scope>
    <source>
        <tissue>Kidney</tissue>
        <tissue>Liver</tissue>
        <tissue>Lung</tissue>
        <tissue>Testis</tissue>
    </source>
</reference>
<comment type="function">
    <text evidence="1">Catalyzes the final step in the metabolic pathway of hydroxyproline.</text>
</comment>
<comment type="catalytic activity">
    <reaction>
        <text>(4S)-4-hydroxy-2-oxoglutarate = glyoxylate + pyruvate</text>
        <dbReference type="Rhea" id="RHEA:35639"/>
        <dbReference type="ChEBI" id="CHEBI:15361"/>
        <dbReference type="ChEBI" id="CHEBI:36655"/>
        <dbReference type="ChEBI" id="CHEBI:71685"/>
        <dbReference type="EC" id="4.1.3.16"/>
    </reaction>
</comment>
<comment type="catalytic activity">
    <reaction>
        <text>(4R)-4-hydroxy-2-oxoglutarate = glyoxylate + pyruvate</text>
        <dbReference type="Rhea" id="RHEA:30687"/>
        <dbReference type="ChEBI" id="CHEBI:15361"/>
        <dbReference type="ChEBI" id="CHEBI:36655"/>
        <dbReference type="ChEBI" id="CHEBI:62213"/>
        <dbReference type="EC" id="4.1.3.16"/>
    </reaction>
</comment>
<comment type="activity regulation">
    <text evidence="1">Inhibited by divalent cations.</text>
</comment>
<comment type="subunit">
    <text evidence="1">Homotetramer.</text>
</comment>
<comment type="subcellular location">
    <subcellularLocation>
        <location evidence="2">Mitochondrion</location>
    </subcellularLocation>
</comment>
<comment type="similarity">
    <text evidence="3">Belongs to the DapA family.</text>
</comment>
<comment type="sequence caution" evidence="3">
    <conflict type="erroneous termination">
        <sequence resource="EMBL-CDS" id="AAH16430"/>
    </conflict>
    <text>Extended C-terminus.</text>
</comment>
<comment type="sequence caution" evidence="3">
    <conflict type="frameshift">
        <sequence resource="EMBL-CDS" id="BAB27226"/>
    </conflict>
</comment>